<evidence type="ECO:0000255" key="1">
    <source>
        <dbReference type="HAMAP-Rule" id="MF_01538"/>
    </source>
</evidence>
<name>Y441_STRT1</name>
<accession>Q5M138</accession>
<protein>
    <recommendedName>
        <fullName evidence="1">UPF0346 protein str0441</fullName>
    </recommendedName>
</protein>
<feature type="chain" id="PRO_0000164300" description="UPF0346 protein str0441">
    <location>
        <begin position="1"/>
        <end position="71"/>
    </location>
</feature>
<comment type="similarity">
    <text evidence="1">Belongs to the UPF0346 family.</text>
</comment>
<proteinExistence type="inferred from homology"/>
<organism>
    <name type="scientific">Streptococcus thermophilus (strain CNRZ 1066)</name>
    <dbReference type="NCBI Taxonomy" id="299768"/>
    <lineage>
        <taxon>Bacteria</taxon>
        <taxon>Bacillati</taxon>
        <taxon>Bacillota</taxon>
        <taxon>Bacilli</taxon>
        <taxon>Lactobacillales</taxon>
        <taxon>Streptococcaceae</taxon>
        <taxon>Streptococcus</taxon>
    </lineage>
</organism>
<reference key="1">
    <citation type="journal article" date="2004" name="Nat. Biotechnol.">
        <title>Complete sequence and comparative genome analysis of the dairy bacterium Streptococcus thermophilus.</title>
        <authorList>
            <person name="Bolotin A."/>
            <person name="Quinquis B."/>
            <person name="Renault P."/>
            <person name="Sorokin A."/>
            <person name="Ehrlich S.D."/>
            <person name="Kulakauskas S."/>
            <person name="Lapidus A."/>
            <person name="Goltsman E."/>
            <person name="Mazur M."/>
            <person name="Pusch G.D."/>
            <person name="Fonstein M."/>
            <person name="Overbeek R."/>
            <person name="Kyprides N."/>
            <person name="Purnelle B."/>
            <person name="Prozzi D."/>
            <person name="Ngui K."/>
            <person name="Masuy D."/>
            <person name="Hancy F."/>
            <person name="Burteau S."/>
            <person name="Boutry M."/>
            <person name="Delcour J."/>
            <person name="Goffeau A."/>
            <person name="Hols P."/>
        </authorList>
    </citation>
    <scope>NUCLEOTIDE SEQUENCE [LARGE SCALE GENOMIC DNA]</scope>
    <source>
        <strain>CNRZ 1066</strain>
    </source>
</reference>
<gene>
    <name type="ordered locus">str0441</name>
</gene>
<sequence>MRKSFYTWLMAQRNPKSNEPVAILADLAFEDSTFPKHTDDFEEVSRYLEDHASFSFNLGQFDQIWEDYLAH</sequence>
<dbReference type="EMBL" id="CP000024">
    <property type="protein sequence ID" value="AAV62042.1"/>
    <property type="molecule type" value="Genomic_DNA"/>
</dbReference>
<dbReference type="RefSeq" id="WP_002944188.1">
    <property type="nucleotide sequence ID" value="NC_006449.1"/>
</dbReference>
<dbReference type="SMR" id="Q5M138"/>
<dbReference type="KEGG" id="stc:str0441"/>
<dbReference type="HOGENOM" id="CLU_177534_1_0_9"/>
<dbReference type="Gene3D" id="1.10.150.260">
    <property type="entry name" value="YozE SAM-like"/>
    <property type="match status" value="1"/>
</dbReference>
<dbReference type="HAMAP" id="MF_01538">
    <property type="entry name" value="UPF0346"/>
    <property type="match status" value="1"/>
</dbReference>
<dbReference type="InterPro" id="IPR010673">
    <property type="entry name" value="UPF0346"/>
</dbReference>
<dbReference type="InterPro" id="IPR023089">
    <property type="entry name" value="YozE_SAM-like"/>
</dbReference>
<dbReference type="InterPro" id="IPR036806">
    <property type="entry name" value="YozE_SAM-like_sf"/>
</dbReference>
<dbReference type="NCBIfam" id="NF010193">
    <property type="entry name" value="PRK13672.1"/>
    <property type="match status" value="1"/>
</dbReference>
<dbReference type="Pfam" id="PF06855">
    <property type="entry name" value="YozE_SAM_like"/>
    <property type="match status" value="1"/>
</dbReference>
<dbReference type="PIRSF" id="PIRSF037262">
    <property type="entry name" value="UCP037262"/>
    <property type="match status" value="1"/>
</dbReference>
<dbReference type="SUPFAM" id="SSF140652">
    <property type="entry name" value="YozE-like"/>
    <property type="match status" value="1"/>
</dbReference>